<proteinExistence type="evidence at protein level"/>
<dbReference type="EMBL" id="AY316678">
    <property type="protein sequence ID" value="AAQ87008.1"/>
    <property type="molecule type" value="mRNA"/>
</dbReference>
<dbReference type="EMBL" id="AL035605">
    <property type="protein sequence ID" value="CAB38300.1"/>
    <property type="status" value="ALT_INIT"/>
    <property type="molecule type" value="Genomic_DNA"/>
</dbReference>
<dbReference type="EMBL" id="AL161591">
    <property type="protein sequence ID" value="CAB80426.1"/>
    <property type="status" value="ALT_INIT"/>
    <property type="molecule type" value="Genomic_DNA"/>
</dbReference>
<dbReference type="EMBL" id="CP002687">
    <property type="protein sequence ID" value="AEE86816.1"/>
    <property type="molecule type" value="Genomic_DNA"/>
</dbReference>
<dbReference type="EMBL" id="AK119075">
    <property type="protein sequence ID" value="BAC43651.1"/>
    <property type="molecule type" value="mRNA"/>
</dbReference>
<dbReference type="EMBL" id="BT025247">
    <property type="protein sequence ID" value="ABF19000.1"/>
    <property type="molecule type" value="mRNA"/>
</dbReference>
<dbReference type="EMBL" id="AY084954">
    <property type="protein sequence ID" value="AAM61515.1"/>
    <property type="molecule type" value="mRNA"/>
</dbReference>
<dbReference type="PIR" id="T04718">
    <property type="entry name" value="T04718"/>
</dbReference>
<dbReference type="RefSeq" id="NP_568031.1">
    <property type="nucleotide sequence ID" value="NM_119924.3"/>
</dbReference>
<dbReference type="SMR" id="Q6EJ98"/>
<dbReference type="BioGRID" id="15196">
    <property type="interactions" value="2"/>
</dbReference>
<dbReference type="IntAct" id="Q6EJ98">
    <property type="interactions" value="3"/>
</dbReference>
<dbReference type="STRING" id="3702.Q6EJ98"/>
<dbReference type="GlyGen" id="Q6EJ98">
    <property type="glycosylation" value="1 site"/>
</dbReference>
<dbReference type="PaxDb" id="3702-AT4G37610.1"/>
<dbReference type="EnsemblPlants" id="AT4G37610.1">
    <property type="protein sequence ID" value="AT4G37610.1"/>
    <property type="gene ID" value="AT4G37610"/>
</dbReference>
<dbReference type="GeneID" id="829915"/>
<dbReference type="Gramene" id="AT4G37610.1">
    <property type="protein sequence ID" value="AT4G37610.1"/>
    <property type="gene ID" value="AT4G37610"/>
</dbReference>
<dbReference type="KEGG" id="ath:AT4G37610"/>
<dbReference type="Araport" id="AT4G37610"/>
<dbReference type="TAIR" id="AT4G37610">
    <property type="gene designation" value="BT5"/>
</dbReference>
<dbReference type="eggNOG" id="KOG1778">
    <property type="taxonomic scope" value="Eukaryota"/>
</dbReference>
<dbReference type="HOGENOM" id="CLU_037906_1_0_1"/>
<dbReference type="InParanoid" id="Q6EJ98"/>
<dbReference type="OMA" id="VCESEFE"/>
<dbReference type="PhylomeDB" id="Q6EJ98"/>
<dbReference type="UniPathway" id="UPA00143"/>
<dbReference type="PRO" id="PR:Q6EJ98"/>
<dbReference type="Proteomes" id="UP000006548">
    <property type="component" value="Chromosome 4"/>
</dbReference>
<dbReference type="ExpressionAtlas" id="Q6EJ98">
    <property type="expression patterns" value="baseline and differential"/>
</dbReference>
<dbReference type="GO" id="GO:0005737">
    <property type="term" value="C:cytoplasm"/>
    <property type="evidence" value="ECO:0000314"/>
    <property type="project" value="TAIR"/>
</dbReference>
<dbReference type="GO" id="GO:0005516">
    <property type="term" value="F:calmodulin binding"/>
    <property type="evidence" value="ECO:0000314"/>
    <property type="project" value="UniProtKB"/>
</dbReference>
<dbReference type="GO" id="GO:0008270">
    <property type="term" value="F:zinc ion binding"/>
    <property type="evidence" value="ECO:0007669"/>
    <property type="project" value="UniProtKB-KW"/>
</dbReference>
<dbReference type="GO" id="GO:0016567">
    <property type="term" value="P:protein ubiquitination"/>
    <property type="evidence" value="ECO:0007669"/>
    <property type="project" value="UniProtKB-UniPathway"/>
</dbReference>
<dbReference type="GO" id="GO:0006355">
    <property type="term" value="P:regulation of DNA-templated transcription"/>
    <property type="evidence" value="ECO:0000304"/>
    <property type="project" value="TAIR"/>
</dbReference>
<dbReference type="GO" id="GO:0009733">
    <property type="term" value="P:response to auxin"/>
    <property type="evidence" value="ECO:0000270"/>
    <property type="project" value="TAIR"/>
</dbReference>
<dbReference type="GO" id="GO:0009409">
    <property type="term" value="P:response to cold"/>
    <property type="evidence" value="ECO:0000270"/>
    <property type="project" value="UniProtKB"/>
</dbReference>
<dbReference type="GO" id="GO:0042542">
    <property type="term" value="P:response to hydrogen peroxide"/>
    <property type="evidence" value="ECO:0000270"/>
    <property type="project" value="UniProtKB"/>
</dbReference>
<dbReference type="GO" id="GO:0009751">
    <property type="term" value="P:response to salicylic acid"/>
    <property type="evidence" value="ECO:0000270"/>
    <property type="project" value="UniProtKB"/>
</dbReference>
<dbReference type="CDD" id="cd14733">
    <property type="entry name" value="BACK"/>
    <property type="match status" value="1"/>
</dbReference>
<dbReference type="CDD" id="cd18313">
    <property type="entry name" value="BTB_POZ_BT"/>
    <property type="match status" value="1"/>
</dbReference>
<dbReference type="FunFam" id="1.20.1020.10:FF:000004">
    <property type="entry name" value="BTB/POZ and TAZ domain-containing protein 2"/>
    <property type="match status" value="1"/>
</dbReference>
<dbReference type="FunFam" id="1.25.40.420:FF:000012">
    <property type="entry name" value="BTB/POZ and TAZ domain-containing protein 2"/>
    <property type="match status" value="1"/>
</dbReference>
<dbReference type="FunFam" id="3.30.710.10:FF:000204">
    <property type="entry name" value="BTB/POZ and TAZ domain-containing protein 3"/>
    <property type="match status" value="1"/>
</dbReference>
<dbReference type="Gene3D" id="1.25.40.420">
    <property type="match status" value="1"/>
</dbReference>
<dbReference type="Gene3D" id="3.30.710.10">
    <property type="entry name" value="Potassium Channel Kv1.1, Chain A"/>
    <property type="match status" value="1"/>
</dbReference>
<dbReference type="Gene3D" id="1.20.1020.10">
    <property type="entry name" value="TAZ domain"/>
    <property type="match status" value="1"/>
</dbReference>
<dbReference type="InterPro" id="IPR044513">
    <property type="entry name" value="BT1/2/3/4/5"/>
</dbReference>
<dbReference type="InterPro" id="IPR000210">
    <property type="entry name" value="BTB/POZ_dom"/>
</dbReference>
<dbReference type="InterPro" id="IPR011333">
    <property type="entry name" value="SKP1/BTB/POZ_sf"/>
</dbReference>
<dbReference type="InterPro" id="IPR035898">
    <property type="entry name" value="TAZ_dom_sf"/>
</dbReference>
<dbReference type="InterPro" id="IPR000197">
    <property type="entry name" value="Znf_TAZ"/>
</dbReference>
<dbReference type="PANTHER" id="PTHR46287">
    <property type="entry name" value="BTB/POZ AND TAZ DOMAIN-CONTAINING PROTEIN 3-RELATED"/>
    <property type="match status" value="1"/>
</dbReference>
<dbReference type="PANTHER" id="PTHR46287:SF9">
    <property type="entry name" value="BTB_POZ AND TAZ DOMAIN-CONTAINING PROTEIN 5"/>
    <property type="match status" value="1"/>
</dbReference>
<dbReference type="Pfam" id="PF00651">
    <property type="entry name" value="BTB"/>
    <property type="match status" value="1"/>
</dbReference>
<dbReference type="Pfam" id="PF02135">
    <property type="entry name" value="zf-TAZ"/>
    <property type="match status" value="1"/>
</dbReference>
<dbReference type="SMART" id="SM00225">
    <property type="entry name" value="BTB"/>
    <property type="match status" value="1"/>
</dbReference>
<dbReference type="SMART" id="SM00551">
    <property type="entry name" value="ZnF_TAZ"/>
    <property type="match status" value="1"/>
</dbReference>
<dbReference type="SUPFAM" id="SSF54695">
    <property type="entry name" value="POZ domain"/>
    <property type="match status" value="1"/>
</dbReference>
<dbReference type="SUPFAM" id="SSF57933">
    <property type="entry name" value="TAZ domain"/>
    <property type="match status" value="1"/>
</dbReference>
<dbReference type="PROSITE" id="PS50097">
    <property type="entry name" value="BTB"/>
    <property type="match status" value="1"/>
</dbReference>
<dbReference type="PROSITE" id="PS50134">
    <property type="entry name" value="ZF_TAZ"/>
    <property type="match status" value="1"/>
</dbReference>
<keyword id="KW-0963">Cytoplasm</keyword>
<keyword id="KW-0479">Metal-binding</keyword>
<keyword id="KW-1185">Reference proteome</keyword>
<keyword id="KW-0833">Ubl conjugation pathway</keyword>
<keyword id="KW-0862">Zinc</keyword>
<keyword id="KW-0863">Zinc-finger</keyword>
<evidence type="ECO:0000250" key="1"/>
<evidence type="ECO:0000255" key="2">
    <source>
        <dbReference type="PROSITE-ProRule" id="PRU00037"/>
    </source>
</evidence>
<evidence type="ECO:0000255" key="3">
    <source>
        <dbReference type="PROSITE-ProRule" id="PRU00203"/>
    </source>
</evidence>
<evidence type="ECO:0000256" key="4">
    <source>
        <dbReference type="SAM" id="MobiDB-lite"/>
    </source>
</evidence>
<evidence type="ECO:0000269" key="5">
    <source>
    </source>
</evidence>
<evidence type="ECO:0000269" key="6">
    <source>
    </source>
</evidence>
<evidence type="ECO:0000269" key="7">
    <source>
    </source>
</evidence>
<evidence type="ECO:0000269" key="8">
    <source>
    </source>
</evidence>
<evidence type="ECO:0000305" key="9"/>
<organism>
    <name type="scientific">Arabidopsis thaliana</name>
    <name type="common">Mouse-ear cress</name>
    <dbReference type="NCBI Taxonomy" id="3702"/>
    <lineage>
        <taxon>Eukaryota</taxon>
        <taxon>Viridiplantae</taxon>
        <taxon>Streptophyta</taxon>
        <taxon>Embryophyta</taxon>
        <taxon>Tracheophyta</taxon>
        <taxon>Spermatophyta</taxon>
        <taxon>Magnoliopsida</taxon>
        <taxon>eudicotyledons</taxon>
        <taxon>Gunneridae</taxon>
        <taxon>Pentapetalae</taxon>
        <taxon>rosids</taxon>
        <taxon>malvids</taxon>
        <taxon>Brassicales</taxon>
        <taxon>Brassicaceae</taxon>
        <taxon>Camelineae</taxon>
        <taxon>Arabidopsis</taxon>
    </lineage>
</organism>
<accession>Q6EJ98</accession>
<accession>Q8GW52</accession>
<accession>Q8LFA7</accession>
<accession>Q9SZF4</accession>
<name>BT5_ARATH</name>
<gene>
    <name type="primary">BT5</name>
    <name type="ordered locus">At4g37610</name>
    <name type="ORF">F19F18.100</name>
</gene>
<comment type="function">
    <text>May act as a substrate-specific adapter of an E3 ubiquitin-protein ligase complex (CUL3-RBX1-BTB) which mediates the ubiquitination and subsequent proteasomal degradation of target proteins.</text>
</comment>
<comment type="pathway">
    <text>Protein modification; protein ubiquitination.</text>
</comment>
<comment type="subunit">
    <text evidence="7">Interacts with CUL3A.</text>
</comment>
<comment type="subcellular location">
    <subcellularLocation>
        <location evidence="8">Cytoplasm</location>
    </subcellularLocation>
</comment>
<comment type="tissue specificity">
    <text evidence="5 8">Preferentially expressed in young leaves, roots and stems.</text>
</comment>
<comment type="induction">
    <text evidence="5 8">Up-regulated by auxin (IAA), salicylic acid (SA), hydrogen peroxide and cold.</text>
</comment>
<comment type="domain">
    <text evidence="6">The BTB/POZ domain mediates the interaction with some component of ubiquitin ligase complexes.</text>
</comment>
<comment type="sequence caution" evidence="9">
    <conflict type="erroneous initiation">
        <sequence resource="EMBL-CDS" id="CAB38300"/>
    </conflict>
    <text>Truncated N-terminus.</text>
</comment>
<comment type="sequence caution" evidence="9">
    <conflict type="erroneous initiation">
        <sequence resource="EMBL-CDS" id="CAB80426"/>
    </conflict>
    <text>Truncated N-terminus.</text>
</comment>
<feature type="chain" id="PRO_0000406146" description="BTB/POZ and TAZ domain-containing protein 5">
    <location>
        <begin position="1"/>
        <end position="368"/>
    </location>
</feature>
<feature type="domain" description="BTB" evidence="2">
    <location>
        <begin position="55"/>
        <end position="123"/>
    </location>
</feature>
<feature type="zinc finger region" description="TAZ-type" evidence="3">
    <location>
        <begin position="233"/>
        <end position="324"/>
    </location>
</feature>
<feature type="region of interest" description="Disordered" evidence="4">
    <location>
        <begin position="1"/>
        <end position="25"/>
    </location>
</feature>
<feature type="region of interest" description="CaM-binding" evidence="1">
    <location>
        <begin position="335"/>
        <end position="358"/>
    </location>
</feature>
<feature type="sequence conflict" description="In Ref. 6; AAM61515." evidence="9" ref="6">
    <original>L</original>
    <variation>V</variation>
    <location>
        <position position="107"/>
    </location>
</feature>
<feature type="sequence conflict" description="In Ref. 6; AAM61515." evidence="9" ref="6">
    <location>
        <position position="139"/>
    </location>
</feature>
<feature type="sequence conflict" description="In Ref. 6; AAM61515." evidence="9" ref="6">
    <original>N</original>
    <variation>K</variation>
    <location>
        <position position="186"/>
    </location>
</feature>
<feature type="sequence conflict" description="In Ref. 4; BAC43651." evidence="9" ref="4">
    <original>A</original>
    <variation>T</variation>
    <location>
        <position position="199"/>
    </location>
</feature>
<protein>
    <recommendedName>
        <fullName>BTB/POZ and TAZ domain-containing protein 5</fullName>
    </recommendedName>
    <alternativeName>
        <fullName>BTB and TAZ domain protein 5</fullName>
    </alternativeName>
</protein>
<reference key="1">
    <citation type="journal article" date="2004" name="Plant Mol. Biol.">
        <title>A novel family of Ca2+/calmodulin-binding proteins involved in transcriptional regulation: interaction with fsh/Ring3 class transcription activators.</title>
        <authorList>
            <person name="Du L."/>
            <person name="Poovaiah B.W."/>
        </authorList>
    </citation>
    <scope>NUCLEOTIDE SEQUENCE [MRNA]</scope>
    <scope>GENE FAMILY</scope>
    <scope>NOMENCLATURE</scope>
    <scope>TISSUE SPECIFICITY</scope>
    <scope>INDUCTION</scope>
    <source>
        <strain>cv. Columbia</strain>
    </source>
</reference>
<reference key="2">
    <citation type="journal article" date="1999" name="Nature">
        <title>Sequence and analysis of chromosome 4 of the plant Arabidopsis thaliana.</title>
        <authorList>
            <person name="Mayer K.F.X."/>
            <person name="Schueller C."/>
            <person name="Wambutt R."/>
            <person name="Murphy G."/>
            <person name="Volckaert G."/>
            <person name="Pohl T."/>
            <person name="Duesterhoeft A."/>
            <person name="Stiekema W."/>
            <person name="Entian K.-D."/>
            <person name="Terryn N."/>
            <person name="Harris B."/>
            <person name="Ansorge W."/>
            <person name="Brandt P."/>
            <person name="Grivell L.A."/>
            <person name="Rieger M."/>
            <person name="Weichselgartner M."/>
            <person name="de Simone V."/>
            <person name="Obermaier B."/>
            <person name="Mache R."/>
            <person name="Mueller M."/>
            <person name="Kreis M."/>
            <person name="Delseny M."/>
            <person name="Puigdomenech P."/>
            <person name="Watson M."/>
            <person name="Schmidtheini T."/>
            <person name="Reichert B."/>
            <person name="Portetelle D."/>
            <person name="Perez-Alonso M."/>
            <person name="Boutry M."/>
            <person name="Bancroft I."/>
            <person name="Vos P."/>
            <person name="Hoheisel J."/>
            <person name="Zimmermann W."/>
            <person name="Wedler H."/>
            <person name="Ridley P."/>
            <person name="Langham S.-A."/>
            <person name="McCullagh B."/>
            <person name="Bilham L."/>
            <person name="Robben J."/>
            <person name="van der Schueren J."/>
            <person name="Grymonprez B."/>
            <person name="Chuang Y.-J."/>
            <person name="Vandenbussche F."/>
            <person name="Braeken M."/>
            <person name="Weltjens I."/>
            <person name="Voet M."/>
            <person name="Bastiaens I."/>
            <person name="Aert R."/>
            <person name="Defoor E."/>
            <person name="Weitzenegger T."/>
            <person name="Bothe G."/>
            <person name="Ramsperger U."/>
            <person name="Hilbert H."/>
            <person name="Braun M."/>
            <person name="Holzer E."/>
            <person name="Brandt A."/>
            <person name="Peters S."/>
            <person name="van Staveren M."/>
            <person name="Dirkse W."/>
            <person name="Mooijman P."/>
            <person name="Klein Lankhorst R."/>
            <person name="Rose M."/>
            <person name="Hauf J."/>
            <person name="Koetter P."/>
            <person name="Berneiser S."/>
            <person name="Hempel S."/>
            <person name="Feldpausch M."/>
            <person name="Lamberth S."/>
            <person name="Van den Daele H."/>
            <person name="De Keyser A."/>
            <person name="Buysshaert C."/>
            <person name="Gielen J."/>
            <person name="Villarroel R."/>
            <person name="De Clercq R."/>
            <person name="van Montagu M."/>
            <person name="Rogers J."/>
            <person name="Cronin A."/>
            <person name="Quail M.A."/>
            <person name="Bray-Allen S."/>
            <person name="Clark L."/>
            <person name="Doggett J."/>
            <person name="Hall S."/>
            <person name="Kay M."/>
            <person name="Lennard N."/>
            <person name="McLay K."/>
            <person name="Mayes R."/>
            <person name="Pettett A."/>
            <person name="Rajandream M.A."/>
            <person name="Lyne M."/>
            <person name="Benes V."/>
            <person name="Rechmann S."/>
            <person name="Borkova D."/>
            <person name="Bloecker H."/>
            <person name="Scharfe M."/>
            <person name="Grimm M."/>
            <person name="Loehnert T.-H."/>
            <person name="Dose S."/>
            <person name="de Haan M."/>
            <person name="Maarse A.C."/>
            <person name="Schaefer M."/>
            <person name="Mueller-Auer S."/>
            <person name="Gabel C."/>
            <person name="Fuchs M."/>
            <person name="Fartmann B."/>
            <person name="Granderath K."/>
            <person name="Dauner D."/>
            <person name="Herzl A."/>
            <person name="Neumann S."/>
            <person name="Argiriou A."/>
            <person name="Vitale D."/>
            <person name="Liguori R."/>
            <person name="Piravandi E."/>
            <person name="Massenet O."/>
            <person name="Quigley F."/>
            <person name="Clabauld G."/>
            <person name="Muendlein A."/>
            <person name="Felber R."/>
            <person name="Schnabl S."/>
            <person name="Hiller R."/>
            <person name="Schmidt W."/>
            <person name="Lecharny A."/>
            <person name="Aubourg S."/>
            <person name="Chefdor F."/>
            <person name="Cooke R."/>
            <person name="Berger C."/>
            <person name="Monfort A."/>
            <person name="Casacuberta E."/>
            <person name="Gibbons T."/>
            <person name="Weber N."/>
            <person name="Vandenbol M."/>
            <person name="Bargues M."/>
            <person name="Terol J."/>
            <person name="Torres A."/>
            <person name="Perez-Perez A."/>
            <person name="Purnelle B."/>
            <person name="Bent E."/>
            <person name="Johnson S."/>
            <person name="Tacon D."/>
            <person name="Jesse T."/>
            <person name="Heijnen L."/>
            <person name="Schwarz S."/>
            <person name="Scholler P."/>
            <person name="Heber S."/>
            <person name="Francs P."/>
            <person name="Bielke C."/>
            <person name="Frishman D."/>
            <person name="Haase D."/>
            <person name="Lemcke K."/>
            <person name="Mewes H.-W."/>
            <person name="Stocker S."/>
            <person name="Zaccaria P."/>
            <person name="Bevan M."/>
            <person name="Wilson R.K."/>
            <person name="de la Bastide M."/>
            <person name="Habermann K."/>
            <person name="Parnell L."/>
            <person name="Dedhia N."/>
            <person name="Gnoj L."/>
            <person name="Schutz K."/>
            <person name="Huang E."/>
            <person name="Spiegel L."/>
            <person name="Sekhon M."/>
            <person name="Murray J."/>
            <person name="Sheet P."/>
            <person name="Cordes M."/>
            <person name="Abu-Threideh J."/>
            <person name="Stoneking T."/>
            <person name="Kalicki J."/>
            <person name="Graves T."/>
            <person name="Harmon G."/>
            <person name="Edwards J."/>
            <person name="Latreille P."/>
            <person name="Courtney L."/>
            <person name="Cloud J."/>
            <person name="Abbott A."/>
            <person name="Scott K."/>
            <person name="Johnson D."/>
            <person name="Minx P."/>
            <person name="Bentley D."/>
            <person name="Fulton B."/>
            <person name="Miller N."/>
            <person name="Greco T."/>
            <person name="Kemp K."/>
            <person name="Kramer J."/>
            <person name="Fulton L."/>
            <person name="Mardis E."/>
            <person name="Dante M."/>
            <person name="Pepin K."/>
            <person name="Hillier L.W."/>
            <person name="Nelson J."/>
            <person name="Spieth J."/>
            <person name="Ryan E."/>
            <person name="Andrews S."/>
            <person name="Geisel C."/>
            <person name="Layman D."/>
            <person name="Du H."/>
            <person name="Ali J."/>
            <person name="Berghoff A."/>
            <person name="Jones K."/>
            <person name="Drone K."/>
            <person name="Cotton M."/>
            <person name="Joshu C."/>
            <person name="Antonoiu B."/>
            <person name="Zidanic M."/>
            <person name="Strong C."/>
            <person name="Sun H."/>
            <person name="Lamar B."/>
            <person name="Yordan C."/>
            <person name="Ma P."/>
            <person name="Zhong J."/>
            <person name="Preston R."/>
            <person name="Vil D."/>
            <person name="Shekher M."/>
            <person name="Matero A."/>
            <person name="Shah R."/>
            <person name="Swaby I.K."/>
            <person name="O'Shaughnessy A."/>
            <person name="Rodriguez M."/>
            <person name="Hoffman J."/>
            <person name="Till S."/>
            <person name="Granat S."/>
            <person name="Shohdy N."/>
            <person name="Hasegawa A."/>
            <person name="Hameed A."/>
            <person name="Lodhi M."/>
            <person name="Johnson A."/>
            <person name="Chen E."/>
            <person name="Marra M.A."/>
            <person name="Martienssen R."/>
            <person name="McCombie W.R."/>
        </authorList>
    </citation>
    <scope>NUCLEOTIDE SEQUENCE [LARGE SCALE GENOMIC DNA]</scope>
    <source>
        <strain>cv. Columbia</strain>
    </source>
</reference>
<reference key="3">
    <citation type="journal article" date="2017" name="Plant J.">
        <title>Araport11: a complete reannotation of the Arabidopsis thaliana reference genome.</title>
        <authorList>
            <person name="Cheng C.Y."/>
            <person name="Krishnakumar V."/>
            <person name="Chan A.P."/>
            <person name="Thibaud-Nissen F."/>
            <person name="Schobel S."/>
            <person name="Town C.D."/>
        </authorList>
    </citation>
    <scope>GENOME REANNOTATION</scope>
    <source>
        <strain>cv. Columbia</strain>
    </source>
</reference>
<reference key="4">
    <citation type="journal article" date="2002" name="Science">
        <title>Functional annotation of a full-length Arabidopsis cDNA collection.</title>
        <authorList>
            <person name="Seki M."/>
            <person name="Narusaka M."/>
            <person name="Kamiya A."/>
            <person name="Ishida J."/>
            <person name="Satou M."/>
            <person name="Sakurai T."/>
            <person name="Nakajima M."/>
            <person name="Enju A."/>
            <person name="Akiyama K."/>
            <person name="Oono Y."/>
            <person name="Muramatsu M."/>
            <person name="Hayashizaki Y."/>
            <person name="Kawai J."/>
            <person name="Carninci P."/>
            <person name="Itoh M."/>
            <person name="Ishii Y."/>
            <person name="Arakawa T."/>
            <person name="Shibata K."/>
            <person name="Shinagawa A."/>
            <person name="Shinozaki K."/>
        </authorList>
    </citation>
    <scope>NUCLEOTIDE SEQUENCE [LARGE SCALE MRNA]</scope>
    <source>
        <strain>cv. Columbia</strain>
    </source>
</reference>
<reference key="5">
    <citation type="submission" date="2006-04" db="EMBL/GenBank/DDBJ databases">
        <title>Arabidopsis ORF clones.</title>
        <authorList>
            <person name="Shinn P."/>
            <person name="Chen H."/>
            <person name="Kim C.J."/>
            <person name="Quinitio C."/>
            <person name="Ecker J.R."/>
        </authorList>
    </citation>
    <scope>NUCLEOTIDE SEQUENCE [LARGE SCALE MRNA]</scope>
    <source>
        <strain>cv. Columbia</strain>
    </source>
</reference>
<reference key="6">
    <citation type="submission" date="2002-03" db="EMBL/GenBank/DDBJ databases">
        <title>Full-length cDNA from Arabidopsis thaliana.</title>
        <authorList>
            <person name="Brover V.V."/>
            <person name="Troukhan M.E."/>
            <person name="Alexandrov N.A."/>
            <person name="Lu Y.-P."/>
            <person name="Flavell R.B."/>
            <person name="Feldmann K.A."/>
        </authorList>
    </citation>
    <scope>NUCLEOTIDE SEQUENCE [LARGE SCALE MRNA]</scope>
</reference>
<reference key="7">
    <citation type="journal article" date="2005" name="J. Biol. Chem.">
        <title>Cullins 3a and 3b assemble with members of the broad complex/tramtrack/bric-a-brac (BTB) protein family to form essential ubiquitin-protein ligases (E3s) in Arabidopsis.</title>
        <authorList>
            <person name="Gingerich D.J."/>
            <person name="Gagne J.M."/>
            <person name="Salter D.W."/>
            <person name="Hellmann H."/>
            <person name="Estelle M."/>
            <person name="Ma L."/>
            <person name="Vierstra R.D."/>
        </authorList>
    </citation>
    <scope>DOMAIN BTB</scope>
</reference>
<reference key="8">
    <citation type="journal article" date="2005" name="Plant Cell">
        <title>Arabidopsis has two redundant Cullin3 proteins that are essential for embryo development and that interact with RBX1 and BTB proteins to form multisubunit E3 ubiquitin ligase complexes in vivo.</title>
        <authorList>
            <person name="Figueroa P."/>
            <person name="Gusmaroli G."/>
            <person name="Serino G."/>
            <person name="Habashi J."/>
            <person name="Ma L."/>
            <person name="Shen Y."/>
            <person name="Feng S."/>
            <person name="Bostick M."/>
            <person name="Callis J."/>
            <person name="Hellmann H."/>
            <person name="Deng X.W."/>
        </authorList>
    </citation>
    <scope>INTERACTION WITH CUL3A</scope>
</reference>
<reference key="9">
    <citation type="journal article" date="2009" name="Plant J.">
        <title>BTB and TAZ DOMAIN scaffold proteins perform a crucial function in Arabidopsis development.</title>
        <authorList>
            <person name="Robert H.S."/>
            <person name="Quint A."/>
            <person name="Brand D."/>
            <person name="Vivian-Smith A."/>
            <person name="Offringa R."/>
        </authorList>
    </citation>
    <scope>SUBCELLULAR LOCATION</scope>
    <scope>INDUCTION BY AUXIN</scope>
    <scope>TISSUE SPECIFICITY</scope>
</reference>
<sequence length="368" mass="42314">MENMDDFSPENVLAPPPPPPPMKKSTDLFMQRSNSFVSKATRDSWDRMFDEAHGADVLIHTDDNGLIYAHSNVIGMASDVIRGMMKQHKRKSHRKSISILGVPHHALRVFIRFLYSSCYEKQDMEDFAIHLLVLSHVYVVPHLKRVCESEFESSLLNKENVIDVFQLALLCDAPRLGLLCHRMILNNFEEVSTSEGWQAMKESHPRLQKELLRSVAYELNSLKQRNRKQKEIQTYTQLYEAMEAFVHICRDGCREIGPTKTETPHMSCGFQACNGLEQLLKHLAGCKLRSIPGGCSRCKRMWQLLELHSRICVDSEQCKVPLCSSLKERMKTQSRKDEKRWKLLVRNVLSTKRIGGSPFFLQAIDVTL</sequence>